<gene>
    <name type="primary">SNX41</name>
    <name type="ordered locus">KLLA0B00803g</name>
</gene>
<accession>Q6CWX3</accession>
<reference key="1">
    <citation type="journal article" date="2004" name="Nature">
        <title>Genome evolution in yeasts.</title>
        <authorList>
            <person name="Dujon B."/>
            <person name="Sherman D."/>
            <person name="Fischer G."/>
            <person name="Durrens P."/>
            <person name="Casaregola S."/>
            <person name="Lafontaine I."/>
            <person name="de Montigny J."/>
            <person name="Marck C."/>
            <person name="Neuveglise C."/>
            <person name="Talla E."/>
            <person name="Goffard N."/>
            <person name="Frangeul L."/>
            <person name="Aigle M."/>
            <person name="Anthouard V."/>
            <person name="Babour A."/>
            <person name="Barbe V."/>
            <person name="Barnay S."/>
            <person name="Blanchin S."/>
            <person name="Beckerich J.-M."/>
            <person name="Beyne E."/>
            <person name="Bleykasten C."/>
            <person name="Boisrame A."/>
            <person name="Boyer J."/>
            <person name="Cattolico L."/>
            <person name="Confanioleri F."/>
            <person name="de Daruvar A."/>
            <person name="Despons L."/>
            <person name="Fabre E."/>
            <person name="Fairhead C."/>
            <person name="Ferry-Dumazet H."/>
            <person name="Groppi A."/>
            <person name="Hantraye F."/>
            <person name="Hennequin C."/>
            <person name="Jauniaux N."/>
            <person name="Joyet P."/>
            <person name="Kachouri R."/>
            <person name="Kerrest A."/>
            <person name="Koszul R."/>
            <person name="Lemaire M."/>
            <person name="Lesur I."/>
            <person name="Ma L."/>
            <person name="Muller H."/>
            <person name="Nicaud J.-M."/>
            <person name="Nikolski M."/>
            <person name="Oztas S."/>
            <person name="Ozier-Kalogeropoulos O."/>
            <person name="Pellenz S."/>
            <person name="Potier S."/>
            <person name="Richard G.-F."/>
            <person name="Straub M.-L."/>
            <person name="Suleau A."/>
            <person name="Swennen D."/>
            <person name="Tekaia F."/>
            <person name="Wesolowski-Louvel M."/>
            <person name="Westhof E."/>
            <person name="Wirth B."/>
            <person name="Zeniou-Meyer M."/>
            <person name="Zivanovic Y."/>
            <person name="Bolotin-Fukuhara M."/>
            <person name="Thierry A."/>
            <person name="Bouchier C."/>
            <person name="Caudron B."/>
            <person name="Scarpelli C."/>
            <person name="Gaillardin C."/>
            <person name="Weissenbach J."/>
            <person name="Wincker P."/>
            <person name="Souciet J.-L."/>
        </authorList>
    </citation>
    <scope>NUCLEOTIDE SEQUENCE [LARGE SCALE GENOMIC DNA]</scope>
    <source>
        <strain>ATCC 8585 / CBS 2359 / DSM 70799 / NBRC 1267 / NRRL Y-1140 / WM37</strain>
    </source>
</reference>
<protein>
    <recommendedName>
        <fullName>Sorting nexin-41</fullName>
    </recommendedName>
</protein>
<keyword id="KW-0072">Autophagy</keyword>
<keyword id="KW-0967">Endosome</keyword>
<keyword id="KW-0446">Lipid-binding</keyword>
<keyword id="KW-0472">Membrane</keyword>
<keyword id="KW-0653">Protein transport</keyword>
<keyword id="KW-1185">Reference proteome</keyword>
<keyword id="KW-0813">Transport</keyword>
<proteinExistence type="inferred from homology"/>
<comment type="function">
    <text evidence="1">May be required for cytoplasm to vacuole transport (Cvt) and pexophagy.</text>
</comment>
<comment type="subcellular location">
    <subcellularLocation>
        <location evidence="1">Endosome membrane</location>
        <topology evidence="1">Peripheral membrane protein</topology>
    </subcellularLocation>
    <subcellularLocation>
        <location evidence="1">Endomembrane system</location>
        <topology evidence="1">Peripheral membrane protein</topology>
    </subcellularLocation>
    <text evidence="1">Endosome and other perivacuolar punctate structures.</text>
</comment>
<comment type="domain">
    <text evidence="1">The PX domain binds phosphatidylinositol 3-phosphate which is necessary for peripheral membrane localization to the perivacuolar punctate structures.</text>
</comment>
<comment type="similarity">
    <text evidence="4">Belongs to the sorting nexin family.</text>
</comment>
<organism>
    <name type="scientific">Kluyveromyces lactis (strain ATCC 8585 / CBS 2359 / DSM 70799 / NBRC 1267 / NRRL Y-1140 / WM37)</name>
    <name type="common">Yeast</name>
    <name type="synonym">Candida sphaerica</name>
    <dbReference type="NCBI Taxonomy" id="284590"/>
    <lineage>
        <taxon>Eukaryota</taxon>
        <taxon>Fungi</taxon>
        <taxon>Dikarya</taxon>
        <taxon>Ascomycota</taxon>
        <taxon>Saccharomycotina</taxon>
        <taxon>Saccharomycetes</taxon>
        <taxon>Saccharomycetales</taxon>
        <taxon>Saccharomycetaceae</taxon>
        <taxon>Kluyveromyces</taxon>
    </lineage>
</organism>
<feature type="chain" id="PRO_0000213830" description="Sorting nexin-41">
    <location>
        <begin position="1"/>
        <end position="575"/>
    </location>
</feature>
<feature type="domain" description="PX" evidence="2">
    <location>
        <begin position="101"/>
        <end position="221"/>
    </location>
</feature>
<feature type="region of interest" description="Disordered" evidence="3">
    <location>
        <begin position="30"/>
        <end position="66"/>
    </location>
</feature>
<feature type="region of interest" description="Disordered" evidence="3">
    <location>
        <begin position="467"/>
        <end position="486"/>
    </location>
</feature>
<feature type="compositionally biased region" description="Polar residues" evidence="3">
    <location>
        <begin position="41"/>
        <end position="55"/>
    </location>
</feature>
<feature type="compositionally biased region" description="Polar residues" evidence="3">
    <location>
        <begin position="469"/>
        <end position="484"/>
    </location>
</feature>
<feature type="binding site" evidence="1">
    <location>
        <position position="139"/>
    </location>
    <ligand>
        <name>a 1,2-diacyl-sn-glycero-3-phospho-(1D-myo-inositol-3-phosphate)</name>
        <dbReference type="ChEBI" id="CHEBI:58088"/>
    </ligand>
</feature>
<feature type="binding site" evidence="1">
    <location>
        <position position="141"/>
    </location>
    <ligand>
        <name>a 1,2-diacyl-sn-glycero-3-phospho-(1D-myo-inositol-3-phosphate)</name>
        <dbReference type="ChEBI" id="CHEBI:58088"/>
    </ligand>
</feature>
<feature type="binding site" evidence="1">
    <location>
        <position position="165"/>
    </location>
    <ligand>
        <name>a 1,2-diacyl-sn-glycero-3-phospho-(1D-myo-inositol-3-phosphate)</name>
        <dbReference type="ChEBI" id="CHEBI:58088"/>
    </ligand>
</feature>
<feature type="binding site" evidence="1">
    <location>
        <position position="188"/>
    </location>
    <ligand>
        <name>a 1,2-diacyl-sn-glycero-3-phospho-(1D-myo-inositol-3-phosphate)</name>
        <dbReference type="ChEBI" id="CHEBI:58088"/>
    </ligand>
</feature>
<sequence length="575" mass="65900">MNVFDGSDEEDNNPFSGTTHLYASGIAAVTDGPDDYDFTEPSINGSSDENAQSNAVAEPIEETDEPAEEIDDDTLQTWRFASAELSRSSAFETSYTNLLGQGKNPEVIRIVDAGQYRDIYGKYAIGYKIEFGGIVVTRRYSEFDSLRQSLCRLLPTIIIPPIPSKHPIIKYLFNPLHAKKDIKIIERRQRLLSRFLNNCHKVREIRNHIVFQKFLNPEYFWKEVLNTPPISILPMNNLLAPPLNPTKPSPIHLLLPTPTVLTMRKHEQLIGRNDVMEIKFADYDSDLIRYKAILQPLNKTVRSIRSNIQTYSAVLSELGAYFNAFSLENSVFQVSALFEQMNRLSMGIEKTGQAIDVNYVSAEIFSEAIMISLEEGSKEMLQFIHEAQRVLHFRNFKQEQFYTIETTIKKRKDRIRELKEADLQAVRLGEALKLNAEESPTVAQVMDSMTRKSANKNHTDKQIMGLFRSSASPNNKSGSDSISSEVEPHLLTKDERVVQVNKLEKELEKLNECFKLIEKDLQQVNESMDNSLNNLEKYFHEKWFLIFRELAHNITSWLKDCSESWKNAKQSIDSI</sequence>
<dbReference type="EMBL" id="CR382122">
    <property type="protein sequence ID" value="CAH01959.1"/>
    <property type="molecule type" value="Genomic_DNA"/>
</dbReference>
<dbReference type="RefSeq" id="XP_451566.1">
    <property type="nucleotide sequence ID" value="XM_451566.1"/>
</dbReference>
<dbReference type="FunCoup" id="Q6CWX3">
    <property type="interactions" value="120"/>
</dbReference>
<dbReference type="STRING" id="284590.Q6CWX3"/>
<dbReference type="PaxDb" id="284590-Q6CWX3"/>
<dbReference type="KEGG" id="kla:KLLA0_B00803g"/>
<dbReference type="eggNOG" id="KOG2273">
    <property type="taxonomic scope" value="Eukaryota"/>
</dbReference>
<dbReference type="HOGENOM" id="CLU_014456_3_0_1"/>
<dbReference type="InParanoid" id="Q6CWX3"/>
<dbReference type="OMA" id="DFKDPWG"/>
<dbReference type="Proteomes" id="UP000000598">
    <property type="component" value="Chromosome B"/>
</dbReference>
<dbReference type="GO" id="GO:0005829">
    <property type="term" value="C:cytosol"/>
    <property type="evidence" value="ECO:0007669"/>
    <property type="project" value="GOC"/>
</dbReference>
<dbReference type="GO" id="GO:0010008">
    <property type="term" value="C:endosome membrane"/>
    <property type="evidence" value="ECO:0007669"/>
    <property type="project" value="UniProtKB-SubCell"/>
</dbReference>
<dbReference type="GO" id="GO:0032266">
    <property type="term" value="F:phosphatidylinositol-3-phosphate binding"/>
    <property type="evidence" value="ECO:0007669"/>
    <property type="project" value="UniProtKB-ARBA"/>
</dbReference>
<dbReference type="GO" id="GO:0006914">
    <property type="term" value="P:autophagy"/>
    <property type="evidence" value="ECO:0007669"/>
    <property type="project" value="UniProtKB-KW"/>
</dbReference>
<dbReference type="GO" id="GO:0015031">
    <property type="term" value="P:protein transport"/>
    <property type="evidence" value="ECO:0007669"/>
    <property type="project" value="UniProtKB-KW"/>
</dbReference>
<dbReference type="GO" id="GO:0042147">
    <property type="term" value="P:retrograde transport, endosome to Golgi"/>
    <property type="evidence" value="ECO:0007669"/>
    <property type="project" value="InterPro"/>
</dbReference>
<dbReference type="CDD" id="cd06867">
    <property type="entry name" value="PX_SNX41_42"/>
    <property type="match status" value="1"/>
</dbReference>
<dbReference type="Gene3D" id="1.20.1270.60">
    <property type="entry name" value="Arfaptin homology (AH) domain/BAR domain"/>
    <property type="match status" value="1"/>
</dbReference>
<dbReference type="Gene3D" id="3.30.1520.10">
    <property type="entry name" value="Phox-like domain"/>
    <property type="match status" value="1"/>
</dbReference>
<dbReference type="InterPro" id="IPR027267">
    <property type="entry name" value="AH/BAR_dom_sf"/>
</dbReference>
<dbReference type="InterPro" id="IPR001683">
    <property type="entry name" value="PX_dom"/>
</dbReference>
<dbReference type="InterPro" id="IPR036871">
    <property type="entry name" value="PX_dom_sf"/>
</dbReference>
<dbReference type="InterPro" id="IPR044106">
    <property type="entry name" value="PX_Snx41/Atg20"/>
</dbReference>
<dbReference type="InterPro" id="IPR051079">
    <property type="entry name" value="Sorting_Nexin_Autophagy"/>
</dbReference>
<dbReference type="PANTHER" id="PTHR46979">
    <property type="entry name" value="SORTING NEXIN-41"/>
    <property type="match status" value="1"/>
</dbReference>
<dbReference type="PANTHER" id="PTHR46979:SF2">
    <property type="entry name" value="SORTING NEXIN-41"/>
    <property type="match status" value="1"/>
</dbReference>
<dbReference type="Pfam" id="PF00787">
    <property type="entry name" value="PX"/>
    <property type="match status" value="1"/>
</dbReference>
<dbReference type="SMART" id="SM00312">
    <property type="entry name" value="PX"/>
    <property type="match status" value="1"/>
</dbReference>
<dbReference type="SUPFAM" id="SSF64268">
    <property type="entry name" value="PX domain"/>
    <property type="match status" value="1"/>
</dbReference>
<dbReference type="PROSITE" id="PS50195">
    <property type="entry name" value="PX"/>
    <property type="match status" value="1"/>
</dbReference>
<evidence type="ECO:0000250" key="1"/>
<evidence type="ECO:0000255" key="2">
    <source>
        <dbReference type="PROSITE-ProRule" id="PRU00147"/>
    </source>
</evidence>
<evidence type="ECO:0000256" key="3">
    <source>
        <dbReference type="SAM" id="MobiDB-lite"/>
    </source>
</evidence>
<evidence type="ECO:0000305" key="4"/>
<name>SNX41_KLULA</name>